<reference key="1">
    <citation type="journal article" date="2010" name="J. Bacteriol.">
        <title>Complete genome sequence of Methanothermobacter marburgensis, a methanoarchaeon model organism.</title>
        <authorList>
            <person name="Liesegang H."/>
            <person name="Kaster A.K."/>
            <person name="Wiezer A."/>
            <person name="Goenrich M."/>
            <person name="Wollherr A."/>
            <person name="Seedorf H."/>
            <person name="Gottschalk G."/>
            <person name="Thauer R.K."/>
        </authorList>
    </citation>
    <scope>NUCLEOTIDE SEQUENCE [LARGE SCALE GENOMIC DNA]</scope>
    <source>
        <strain>ATCC BAA-927 / DSM 2133 / JCM 14651 / NBRC 100331 / OCM 82 / Marburg</strain>
    </source>
</reference>
<reference key="2">
    <citation type="journal article" date="1992" name="J. Biol. Chem.">
        <title>The purification, characterization, and primary structure of a small redox protein from Methanobacterium thermoautotrophicum, an archaebacterium.</title>
        <authorList>
            <person name="McFarlan S.C."/>
            <person name="Terrell C.A."/>
            <person name="Hogenkamp H.P.C."/>
        </authorList>
    </citation>
    <scope>PROTEIN SEQUENCE OF 2-84</scope>
    <source>
        <strain>ATCC BAA-927 / DSM 2133 / JCM 14651 / NBRC 100331 / OCM 82 / Marburg</strain>
    </source>
</reference>
<feature type="initiator methionine" description="Removed" evidence="3">
    <location>
        <position position="1"/>
    </location>
</feature>
<feature type="chain" id="PRO_0000141648" description="Probable Thioredoxin">
    <location>
        <begin position="2"/>
        <end position="85"/>
    </location>
</feature>
<feature type="domain" description="Glutaredoxin" evidence="2">
    <location>
        <begin position="2"/>
        <end position="85"/>
    </location>
</feature>
<feature type="disulfide bond" description="Redox-active" evidence="1">
    <location>
        <begin position="13"/>
        <end position="16"/>
    </location>
</feature>
<feature type="sequence conflict" description="In Ref. 2; AA sequence." evidence="4" ref="2">
    <original>N</original>
    <variation>D</variation>
    <location>
        <position position="62"/>
    </location>
</feature>
<protein>
    <recommendedName>
        <fullName>Probable Thioredoxin</fullName>
    </recommendedName>
    <alternativeName>
        <fullName>Glutaredoxin-like protein</fullName>
    </alternativeName>
</protein>
<gene>
    <name type="ordered locus">MTBMA_c12030</name>
</gene>
<name>THIO_METTM</name>
<accession>P42035</accession>
<accession>D9PX45</accession>
<sequence length="85" mass="9406">MVVKIEVFTSPTCPYCPMAIEVVDEAKKEFGDKIDVEKIDIMVDREKAIDYGLMAVPAIAINGVVRFVGAPGREELFEAISDEIE</sequence>
<keyword id="KW-0963">Cytoplasm</keyword>
<keyword id="KW-0903">Direct protein sequencing</keyword>
<keyword id="KW-1015">Disulfide bond</keyword>
<keyword id="KW-0249">Electron transport</keyword>
<keyword id="KW-0676">Redox-active center</keyword>
<keyword id="KW-0813">Transport</keyword>
<organism>
    <name type="scientific">Methanothermobacter marburgensis (strain ATCC BAA-927 / DSM 2133 / JCM 14651 / NBRC 100331 / OCM 82 / Marburg)</name>
    <name type="common">Methanobacterium thermoautotrophicum</name>
    <dbReference type="NCBI Taxonomy" id="79929"/>
    <lineage>
        <taxon>Archaea</taxon>
        <taxon>Methanobacteriati</taxon>
        <taxon>Methanobacteriota</taxon>
        <taxon>Methanomada group</taxon>
        <taxon>Methanobacteria</taxon>
        <taxon>Methanobacteriales</taxon>
        <taxon>Methanobacteriaceae</taxon>
        <taxon>Methanothermobacter</taxon>
    </lineage>
</organism>
<comment type="function">
    <text>Does not function as a glutathione-disulfide oxidoreductase in the presence of glutathione and glutathione reductase. May be a component of a ribonucleotide-reducing system distinct from the previously described systems utilizing thioredoxin or glutaredoxin.</text>
</comment>
<comment type="subcellular location">
    <subcellularLocation>
        <location>Cytoplasm</location>
    </subcellularLocation>
</comment>
<comment type="similarity">
    <text evidence="4">Belongs to the glutaredoxin family.</text>
</comment>
<proteinExistence type="evidence at protein level"/>
<evidence type="ECO:0000250" key="1"/>
<evidence type="ECO:0000255" key="2">
    <source>
        <dbReference type="PROSITE-ProRule" id="PRU00686"/>
    </source>
</evidence>
<evidence type="ECO:0000269" key="3">
    <source>
    </source>
</evidence>
<evidence type="ECO:0000305" key="4"/>
<dbReference type="EMBL" id="CP001710">
    <property type="protein sequence ID" value="ADL58793.1"/>
    <property type="molecule type" value="Genomic_DNA"/>
</dbReference>
<dbReference type="RefSeq" id="WP_013296015.1">
    <property type="nucleotide sequence ID" value="NC_014408.1"/>
</dbReference>
<dbReference type="SMR" id="P42035"/>
<dbReference type="STRING" id="79929.MTBMA_c12030"/>
<dbReference type="PaxDb" id="79929-MTBMA_c12030"/>
<dbReference type="GeneID" id="92393811"/>
<dbReference type="GeneID" id="9704911"/>
<dbReference type="KEGG" id="mmg:MTBMA_c12030"/>
<dbReference type="PATRIC" id="fig|79929.8.peg.1169"/>
<dbReference type="HOGENOM" id="CLU_090389_20_2_2"/>
<dbReference type="OrthoDB" id="35385at2157"/>
<dbReference type="Proteomes" id="UP000000345">
    <property type="component" value="Chromosome"/>
</dbReference>
<dbReference type="GO" id="GO:0005737">
    <property type="term" value="C:cytoplasm"/>
    <property type="evidence" value="ECO:0007669"/>
    <property type="project" value="UniProtKB-SubCell"/>
</dbReference>
<dbReference type="GO" id="GO:0009055">
    <property type="term" value="F:electron transfer activity"/>
    <property type="evidence" value="ECO:0007669"/>
    <property type="project" value="InterPro"/>
</dbReference>
<dbReference type="GO" id="GO:0015035">
    <property type="term" value="F:protein-disulfide reductase activity"/>
    <property type="evidence" value="ECO:0007669"/>
    <property type="project" value="InterPro"/>
</dbReference>
<dbReference type="GO" id="GO:0045454">
    <property type="term" value="P:cell redox homeostasis"/>
    <property type="evidence" value="ECO:0007669"/>
    <property type="project" value="InterPro"/>
</dbReference>
<dbReference type="CDD" id="cd02973">
    <property type="entry name" value="TRX_GRX_like"/>
    <property type="match status" value="1"/>
</dbReference>
<dbReference type="Gene3D" id="3.40.30.10">
    <property type="entry name" value="Glutaredoxin"/>
    <property type="match status" value="1"/>
</dbReference>
<dbReference type="InterPro" id="IPR011767">
    <property type="entry name" value="GLR_AS"/>
</dbReference>
<dbReference type="InterPro" id="IPR004502">
    <property type="entry name" value="Thio_glut"/>
</dbReference>
<dbReference type="InterPro" id="IPR012336">
    <property type="entry name" value="Thioredoxin-like_fold"/>
</dbReference>
<dbReference type="InterPro" id="IPR036249">
    <property type="entry name" value="Thioredoxin-like_sf"/>
</dbReference>
<dbReference type="InterPro" id="IPR013766">
    <property type="entry name" value="Thioredoxin_domain"/>
</dbReference>
<dbReference type="NCBIfam" id="TIGR00411">
    <property type="entry name" value="redox_disulf_1"/>
    <property type="match status" value="1"/>
</dbReference>
<dbReference type="PANTHER" id="PTHR37170:SF1">
    <property type="entry name" value="GLUTAREDOXIN-LIKE PROTEIN"/>
    <property type="match status" value="1"/>
</dbReference>
<dbReference type="PANTHER" id="PTHR37170">
    <property type="entry name" value="GLUTAREDOXIN-RELATED"/>
    <property type="match status" value="1"/>
</dbReference>
<dbReference type="Pfam" id="PF13192">
    <property type="entry name" value="Thioredoxin_3"/>
    <property type="match status" value="1"/>
</dbReference>
<dbReference type="SUPFAM" id="SSF52833">
    <property type="entry name" value="Thioredoxin-like"/>
    <property type="match status" value="1"/>
</dbReference>
<dbReference type="PROSITE" id="PS00195">
    <property type="entry name" value="GLUTAREDOXIN_1"/>
    <property type="match status" value="1"/>
</dbReference>
<dbReference type="PROSITE" id="PS51354">
    <property type="entry name" value="GLUTAREDOXIN_2"/>
    <property type="match status" value="1"/>
</dbReference>